<name>CAP8_ADEM1</name>
<comment type="function">
    <molecule>Hexon-linking protein-N</molecule>
    <text evidence="1">Structural component of the virion that acts as a cement protein on the capsid interior and which glue the peripentonal hexons and group-of-nine hexons together.</text>
</comment>
<comment type="function">
    <molecule>Hexon-linking protein-C</molecule>
    <text evidence="1">Structural component of the virion that acts as a cement protein on the capsid interior and which glue the peripentonal hexons and group-of-nine hexons together.</text>
</comment>
<comment type="subunit">
    <text evidence="1">Interacts with the peripentonal hexons as well as the hexons in the facets. Part of a complex composed of the core-capsid bridging protein, the endosome lysis protein VI and the hexon-linking protein VIII; these interactions bridge the virus core to the capsid.</text>
</comment>
<comment type="subcellular location">
    <molecule>Hexon-linking protein-C</molecule>
    <subcellularLocation>
        <location evidence="1">Virion</location>
    </subcellularLocation>
    <text evidence="1">Located on the inner side of the capsid shell. Present in 120 copies per virion.</text>
</comment>
<comment type="subcellular location">
    <molecule>Pre-hexon-linking protein VIII</molecule>
    <subcellularLocation>
        <location evidence="1">Host nucleus</location>
    </subcellularLocation>
</comment>
<comment type="subcellular location">
    <molecule>Hexon-linking protein-N</molecule>
    <subcellularLocation>
        <location evidence="1">Virion</location>
    </subcellularLocation>
    <text evidence="1">Located on the inner side of the capsid shell. Present in 120 copies per virion.</text>
</comment>
<comment type="induction">
    <text evidence="1">Expressed in the late phase of the viral replicative cycle.</text>
</comment>
<comment type="PTM">
    <text evidence="1">Cleaved by the viral protease during virion maturation. May cause the middle segment to be shed from the capsid.</text>
</comment>
<comment type="miscellaneous">
    <text evidence="1">All late proteins expressed from the major late promoter are produced by alternative splicing and alternative polyadenylation of the same gene giving rise to non-overlapping ORFs. A leader sequence is present in the N-terminus of all these mRNAs and is recognized by the viral shutoff protein to provide expression although conventional translation via ribosome scanning from the cap has been shut off in the host cell.</text>
</comment>
<comment type="similarity">
    <text evidence="1 2">Belongs to the adenoviridae hexon-linking protein family.</text>
</comment>
<organism>
    <name type="scientific">Murine adenovirus A serotype 1</name>
    <name type="common">MAdV-1</name>
    <name type="synonym">Murine adenovirus 1</name>
    <dbReference type="NCBI Taxonomy" id="10530"/>
    <lineage>
        <taxon>Viruses</taxon>
        <taxon>Varidnaviria</taxon>
        <taxon>Bamfordvirae</taxon>
        <taxon>Preplasmiviricota</taxon>
        <taxon>Tectiliviricetes</taxon>
        <taxon>Rowavirales</taxon>
        <taxon>Adenoviridae</taxon>
        <taxon>Mastadenovirus</taxon>
        <taxon>Murine mastadenovirus A</taxon>
    </lineage>
</organism>
<dbReference type="EMBL" id="M30594">
    <property type="protein sequence ID" value="AAA42432.1"/>
    <property type="molecule type" value="Genomic_DNA"/>
</dbReference>
<dbReference type="PIR" id="A33382">
    <property type="entry name" value="SXADMS"/>
</dbReference>
<dbReference type="SMR" id="P19722"/>
<dbReference type="GO" id="GO:0042025">
    <property type="term" value="C:host cell nucleus"/>
    <property type="evidence" value="ECO:0007669"/>
    <property type="project" value="UniProtKB-SubCell"/>
</dbReference>
<dbReference type="GO" id="GO:0019028">
    <property type="term" value="C:viral capsid"/>
    <property type="evidence" value="ECO:0007669"/>
    <property type="project" value="UniProtKB-UniRule"/>
</dbReference>
<dbReference type="GO" id="GO:0031423">
    <property type="term" value="F:hexon binding"/>
    <property type="evidence" value="ECO:0007669"/>
    <property type="project" value="InterPro"/>
</dbReference>
<dbReference type="Gene3D" id="6.10.250.1460">
    <property type="match status" value="1"/>
</dbReference>
<dbReference type="HAMAP" id="MF_04049">
    <property type="entry name" value="ADV_CAP8"/>
    <property type="match status" value="1"/>
</dbReference>
<dbReference type="InterPro" id="IPR000646">
    <property type="entry name" value="Adeno_PVIII"/>
</dbReference>
<dbReference type="Pfam" id="PF01310">
    <property type="entry name" value="Adeno_PVIII"/>
    <property type="match status" value="1"/>
</dbReference>
<organismHost>
    <name type="scientific">Mus musculus</name>
    <name type="common">Mouse</name>
    <dbReference type="NCBI Taxonomy" id="10090"/>
</organismHost>
<proteinExistence type="inferred from homology"/>
<accession>P19722</accession>
<sequence>MSAPSPYVWTFQPQRGTAAGASQDYSTRINWLSAGPELRGKVVQLNEARNAILMKEQESVPTPRAEANPSFWPAALIFQPRPQAIPVHPAHPDTFDAALTSNGAQLAGGAWINYKNGSVRYEAPLQLAEEQVGGPLNAFAIKHQLQLAGGALSASMSEMSGAPRIPRSGGIGSWQFSREFPPTVYLNPFSGSPDTFPHQFLSNYDSFSHTVDGYD</sequence>
<evidence type="ECO:0000255" key="1">
    <source>
        <dbReference type="HAMAP-Rule" id="MF_04049"/>
    </source>
</evidence>
<evidence type="ECO:0000305" key="2"/>
<reference key="1">
    <citation type="journal article" date="1989" name="J. Virol.">
        <title>The mouse adenovirus type 1 contains an unusual E3 region.</title>
        <authorList>
            <person name="Raviprakash K.S."/>
            <person name="Grunhaus A."/>
            <person name="el Kholy M.A."/>
            <person name="Horwitz M.S."/>
        </authorList>
    </citation>
    <scope>NUCLEOTIDE SEQUENCE [GENOMIC DNA]</scope>
</reference>
<gene>
    <name evidence="1" type="primary">L4</name>
</gene>
<protein>
    <recommendedName>
        <fullName evidence="1">Pre-hexon-linking protein VIII</fullName>
    </recommendedName>
    <alternativeName>
        <fullName evidence="1">Pre-protein VIII</fullName>
        <shortName evidence="1">pVIII</shortName>
    </alternativeName>
    <component>
        <recommendedName>
            <fullName evidence="1">Hexon-linking protein-N</fullName>
        </recommendedName>
        <alternativeName>
            <fullName evidence="1">12.1 kDa protein VIII</fullName>
        </alternativeName>
        <alternativeName>
            <fullName evidence="1">Protein VIII-N</fullName>
        </alternativeName>
    </component>
    <component>
        <recommendedName>
            <fullName evidence="1">Hexon-linking protein-C</fullName>
        </recommendedName>
        <alternativeName>
            <fullName evidence="1">7.6 kDa protein VIII</fullName>
        </alternativeName>
        <alternativeName>
            <fullName evidence="1">Protein VIII-C</fullName>
        </alternativeName>
    </component>
</protein>
<feature type="chain" id="PRO_0000421420" description="Pre-hexon-linking protein VIII" evidence="1">
    <location>
        <begin position="1"/>
        <end position="215"/>
    </location>
</feature>
<feature type="peptide" id="PRO_0000421421" description="Hexon-linking protein-N" evidence="1">
    <location>
        <begin position="1"/>
        <end position="109"/>
    </location>
</feature>
<feature type="propeptide" id="PRO_0000036513" evidence="1">
    <location>
        <begin position="110"/>
        <end position="150"/>
    </location>
</feature>
<feature type="peptide" id="PRO_0000036514" description="Hexon-linking protein-C" evidence="1">
    <location>
        <begin position="151"/>
        <end position="215"/>
    </location>
</feature>
<feature type="site" description="Cleavage; by viral protease" evidence="1">
    <location>
        <begin position="109"/>
        <end position="110"/>
    </location>
</feature>
<feature type="site" description="Cleavage; by viral protease" evidence="1">
    <location>
        <begin position="150"/>
        <end position="151"/>
    </location>
</feature>
<feature type="modified residue" description="Phosphothreonine; by host" evidence="1">
    <location>
        <position position="62"/>
    </location>
</feature>
<keyword id="KW-0167">Capsid protein</keyword>
<keyword id="KW-1048">Host nucleus</keyword>
<keyword id="KW-0426">Late protein</keyword>
<keyword id="KW-0597">Phosphoprotein</keyword>
<keyword id="KW-0946">Virion</keyword>